<proteinExistence type="evidence at transcript level"/>
<name>CPT2_XENTR</name>
<evidence type="ECO:0000250" key="1"/>
<evidence type="ECO:0000250" key="2">
    <source>
        <dbReference type="UniProtKB" id="P23786"/>
    </source>
</evidence>
<evidence type="ECO:0000255" key="3"/>
<evidence type="ECO:0000305" key="4"/>
<dbReference type="EC" id="2.3.1.21"/>
<dbReference type="EMBL" id="BC063210">
    <property type="protein sequence ID" value="AAH63210.1"/>
    <property type="molecule type" value="mRNA"/>
</dbReference>
<dbReference type="RefSeq" id="NP_989193.1">
    <property type="nucleotide sequence ID" value="NM_203862.2"/>
</dbReference>
<dbReference type="RefSeq" id="XP_012816216.1">
    <property type="nucleotide sequence ID" value="XM_012960762.3"/>
</dbReference>
<dbReference type="SMR" id="Q6P4X5"/>
<dbReference type="FunCoup" id="Q6P4X5">
    <property type="interactions" value="1437"/>
</dbReference>
<dbReference type="STRING" id="8364.ENSXETP00000039506"/>
<dbReference type="PaxDb" id="8364-ENSXETP00000017686"/>
<dbReference type="GeneID" id="394801"/>
<dbReference type="KEGG" id="xtr:394801"/>
<dbReference type="AGR" id="Xenbase:XB-GENE-963400"/>
<dbReference type="CTD" id="1376"/>
<dbReference type="Xenbase" id="XB-GENE-963400">
    <property type="gene designation" value="cpt2"/>
</dbReference>
<dbReference type="eggNOG" id="KOG3719">
    <property type="taxonomic scope" value="Eukaryota"/>
</dbReference>
<dbReference type="InParanoid" id="Q6P4X5"/>
<dbReference type="OMA" id="HILVMRR"/>
<dbReference type="OrthoDB" id="240216at2759"/>
<dbReference type="PhylomeDB" id="Q6P4X5"/>
<dbReference type="TreeFam" id="TF315202"/>
<dbReference type="Reactome" id="R-XTR-200425">
    <property type="pathway name" value="Carnitine shuttle"/>
</dbReference>
<dbReference type="UniPathway" id="UPA00659"/>
<dbReference type="Proteomes" id="UP000008143">
    <property type="component" value="Chromosome 4"/>
</dbReference>
<dbReference type="Bgee" id="ENSXETG00000008070">
    <property type="expression patterns" value="Expressed in skeletal muscle tissue and 15 other cell types or tissues"/>
</dbReference>
<dbReference type="GO" id="GO:0005743">
    <property type="term" value="C:mitochondrial inner membrane"/>
    <property type="evidence" value="ECO:0007669"/>
    <property type="project" value="UniProtKB-SubCell"/>
</dbReference>
<dbReference type="GO" id="GO:0008458">
    <property type="term" value="F:carnitine O-octanoyltransferase activity"/>
    <property type="evidence" value="ECO:0007669"/>
    <property type="project" value="RHEA"/>
</dbReference>
<dbReference type="GO" id="GO:0004095">
    <property type="term" value="F:carnitine O-palmitoyltransferase activity"/>
    <property type="evidence" value="ECO:0007669"/>
    <property type="project" value="UniProtKB-EC"/>
</dbReference>
<dbReference type="GO" id="GO:0006635">
    <property type="term" value="P:fatty acid beta-oxidation"/>
    <property type="evidence" value="ECO:0007669"/>
    <property type="project" value="UniProtKB-UniPathway"/>
</dbReference>
<dbReference type="FunFam" id="1.20.1280.180:FF:000001">
    <property type="entry name" value="Carnitine O-palmitoyltransferase 2, mitochondrial"/>
    <property type="match status" value="1"/>
</dbReference>
<dbReference type="FunFam" id="1.10.275.20:FF:000001">
    <property type="entry name" value="carnitine O-palmitoyltransferase 2, mitochondrial"/>
    <property type="match status" value="1"/>
</dbReference>
<dbReference type="FunFam" id="3.30.559.10:FF:000010">
    <property type="entry name" value="carnitine O-palmitoyltransferase 2, mitochondrial"/>
    <property type="match status" value="1"/>
</dbReference>
<dbReference type="Gene3D" id="1.20.1280.180">
    <property type="match status" value="1"/>
</dbReference>
<dbReference type="Gene3D" id="3.30.559.10">
    <property type="entry name" value="Chloramphenicol acetyltransferase-like domain"/>
    <property type="match status" value="1"/>
</dbReference>
<dbReference type="Gene3D" id="1.10.275.20">
    <property type="entry name" value="Choline/Carnitine o-acyltransferase"/>
    <property type="match status" value="1"/>
</dbReference>
<dbReference type="Gene3D" id="3.30.559.70">
    <property type="entry name" value="Choline/Carnitine o-acyltransferase, domain 2"/>
    <property type="match status" value="1"/>
</dbReference>
<dbReference type="InterPro" id="IPR000542">
    <property type="entry name" value="Carn_acyl_trans"/>
</dbReference>
<dbReference type="InterPro" id="IPR042572">
    <property type="entry name" value="Carn_acyl_trans_N"/>
</dbReference>
<dbReference type="InterPro" id="IPR023213">
    <property type="entry name" value="CAT-like_dom_sf"/>
</dbReference>
<dbReference type="InterPro" id="IPR039551">
    <property type="entry name" value="Cho/carn_acyl_trans"/>
</dbReference>
<dbReference type="InterPro" id="IPR042231">
    <property type="entry name" value="Cho/carn_acyl_trans_2"/>
</dbReference>
<dbReference type="PANTHER" id="PTHR22589">
    <property type="entry name" value="CARNITINE O-ACYLTRANSFERASE"/>
    <property type="match status" value="1"/>
</dbReference>
<dbReference type="PANTHER" id="PTHR22589:SF16">
    <property type="entry name" value="CARNITINE O-PALMITOYLTRANSFERASE 2, MITOCHONDRIAL"/>
    <property type="match status" value="1"/>
</dbReference>
<dbReference type="Pfam" id="PF00755">
    <property type="entry name" value="Carn_acyltransf"/>
    <property type="match status" value="1"/>
</dbReference>
<dbReference type="SUPFAM" id="SSF52777">
    <property type="entry name" value="CoA-dependent acyltransferases"/>
    <property type="match status" value="2"/>
</dbReference>
<dbReference type="PROSITE" id="PS00439">
    <property type="entry name" value="ACYLTRANSF_C_1"/>
    <property type="match status" value="1"/>
</dbReference>
<dbReference type="PROSITE" id="PS00440">
    <property type="entry name" value="ACYLTRANSF_C_2"/>
    <property type="match status" value="1"/>
</dbReference>
<sequence>MARLLTSSSALRWGAVSSSQSVGRAYSSGSPDTEYVQRSIVPTMHFQKSLPRLPIPKLEDTIKRYLNAQRPLLDDVQFKKTEQLALNFQNGVGKQLHEELVQQDKQNKHTSYISGPWFDMYLCARESIVLNFNPFISFTPDPRPDYNRQLIRATNMTVSAMRFLKTMRAGYLEPEIFHLNPAKSDTLTFRKLIRFVPSSLSWYGAYMVNAYPLDMSQYFRLFNGTRIPKPNRDELWTDEKGRHLLVLRKGNFYVFDVIDKDGNIVKASEIQAHLQHILSDTTPAPEFPLGYLTSEERNTWAVLRQKLLNNGNQEALAKVDSAVFCLCLDDFPVEDRVSLSHNMLHGSGLNRWFDKSFSIIMTEDGTAAVNFEHSWGDGVAVLRFQNEVFKDSTQRPAISPESCSAPVDSSKAVQRLHFNLDDSLKAAIANAKEKFDTSVNALSIATMEFKKGGKELLKTQKLSPDAVSQLSFQMAFLRQYGKTTATYESCSTAAFKHGRTETVRPASIYTKKCSEAFVMHPSKHSPAELRSMLQDCSKYHGQLTKEAAMGQGFDRHLFALRYLASSKGLSLPEIYQDASYAQINHNVLSTSTLTSPAVQLGGFAPVVPDGFGVGYGVHDDWIGCNVSSYQTRDVRQFVECVHQSLDDIFTVLQDKPIK</sequence>
<protein>
    <recommendedName>
        <fullName>Carnitine O-palmitoyltransferase 2, mitochondrial</fullName>
        <ecNumber>2.3.1.21</ecNumber>
    </recommendedName>
    <alternativeName>
        <fullName>Carnitine palmitoyltransferase II</fullName>
        <shortName>CPT II</shortName>
    </alternativeName>
</protein>
<organism>
    <name type="scientific">Xenopus tropicalis</name>
    <name type="common">Western clawed frog</name>
    <name type="synonym">Silurana tropicalis</name>
    <dbReference type="NCBI Taxonomy" id="8364"/>
    <lineage>
        <taxon>Eukaryota</taxon>
        <taxon>Metazoa</taxon>
        <taxon>Chordata</taxon>
        <taxon>Craniata</taxon>
        <taxon>Vertebrata</taxon>
        <taxon>Euteleostomi</taxon>
        <taxon>Amphibia</taxon>
        <taxon>Batrachia</taxon>
        <taxon>Anura</taxon>
        <taxon>Pipoidea</taxon>
        <taxon>Pipidae</taxon>
        <taxon>Xenopodinae</taxon>
        <taxon>Xenopus</taxon>
        <taxon>Silurana</taxon>
    </lineage>
</organism>
<comment type="function">
    <text evidence="2">Involved in the intramitochondrial synthesis of acylcarnitines from accumulated acyl-CoA metabolites. Reconverts acylcarnitines back into the respective acyl-CoA esters that can then undergo beta-oxidation, an essential step for the mitochondrial uptake of long-chain fatty acids and their subsequent beta-oxidation in the mitochondrion. Active with medium (C8-C12) and long-chain (C14-C18) acyl-CoA esters.</text>
</comment>
<comment type="catalytic activity">
    <reaction evidence="2">
        <text>(R)-carnitine + hexadecanoyl-CoA = O-hexadecanoyl-(R)-carnitine + CoA</text>
        <dbReference type="Rhea" id="RHEA:12661"/>
        <dbReference type="ChEBI" id="CHEBI:16347"/>
        <dbReference type="ChEBI" id="CHEBI:17490"/>
        <dbReference type="ChEBI" id="CHEBI:57287"/>
        <dbReference type="ChEBI" id="CHEBI:57379"/>
        <dbReference type="EC" id="2.3.1.21"/>
    </reaction>
    <physiologicalReaction direction="right-to-left" evidence="2">
        <dbReference type="Rhea" id="RHEA:12663"/>
    </physiologicalReaction>
</comment>
<comment type="catalytic activity">
    <reaction evidence="2">
        <text>octanoyl-CoA + (R)-carnitine = O-octanoyl-(R)-carnitine + CoA</text>
        <dbReference type="Rhea" id="RHEA:17177"/>
        <dbReference type="ChEBI" id="CHEBI:16347"/>
        <dbReference type="ChEBI" id="CHEBI:18102"/>
        <dbReference type="ChEBI" id="CHEBI:57287"/>
        <dbReference type="ChEBI" id="CHEBI:57386"/>
    </reaction>
</comment>
<comment type="catalytic activity">
    <reaction evidence="2">
        <text>decanoyl-CoA + (R)-carnitine = O-decanoyl-(R)-carnitine + CoA</text>
        <dbReference type="Rhea" id="RHEA:44828"/>
        <dbReference type="ChEBI" id="CHEBI:16347"/>
        <dbReference type="ChEBI" id="CHEBI:28717"/>
        <dbReference type="ChEBI" id="CHEBI:57287"/>
        <dbReference type="ChEBI" id="CHEBI:61430"/>
    </reaction>
</comment>
<comment type="catalytic activity">
    <reaction evidence="2">
        <text>dodecanoyl-CoA + (R)-carnitine = O-dodecanoyl-R-carnitine + CoA</text>
        <dbReference type="Rhea" id="RHEA:40279"/>
        <dbReference type="ChEBI" id="CHEBI:16347"/>
        <dbReference type="ChEBI" id="CHEBI:57287"/>
        <dbReference type="ChEBI" id="CHEBI:57375"/>
        <dbReference type="ChEBI" id="CHEBI:77086"/>
    </reaction>
</comment>
<comment type="catalytic activity">
    <reaction evidence="2">
        <text>tetradecanoyl-CoA + (R)-carnitine = O-tetradecanoyl-(R)-carnitine + CoA</text>
        <dbReference type="Rhea" id="RHEA:44832"/>
        <dbReference type="ChEBI" id="CHEBI:16347"/>
        <dbReference type="ChEBI" id="CHEBI:57287"/>
        <dbReference type="ChEBI" id="CHEBI:57385"/>
        <dbReference type="ChEBI" id="CHEBI:84634"/>
    </reaction>
</comment>
<comment type="catalytic activity">
    <reaction evidence="2">
        <text>(R)-carnitine + octadecanoyl-CoA = O-octadecanoyl-(R)-carnitine + CoA</text>
        <dbReference type="Rhea" id="RHEA:44840"/>
        <dbReference type="ChEBI" id="CHEBI:16347"/>
        <dbReference type="ChEBI" id="CHEBI:57287"/>
        <dbReference type="ChEBI" id="CHEBI:57394"/>
        <dbReference type="ChEBI" id="CHEBI:84644"/>
    </reaction>
</comment>
<comment type="catalytic activity">
    <reaction evidence="2">
        <text>eicosanoyl-CoA + (R)-carnitine = O-eicosanoyl-(R)-carnitine + CoA</text>
        <dbReference type="Rhea" id="RHEA:44844"/>
        <dbReference type="ChEBI" id="CHEBI:16347"/>
        <dbReference type="ChEBI" id="CHEBI:57287"/>
        <dbReference type="ChEBI" id="CHEBI:57380"/>
        <dbReference type="ChEBI" id="CHEBI:84645"/>
    </reaction>
</comment>
<comment type="catalytic activity">
    <reaction evidence="2">
        <text>(9Z)-tetradecenoyl-CoA + (R)-carnitine = O-(9Z)-tetradecenoyl-(R)-carnitine + CoA</text>
        <dbReference type="Rhea" id="RHEA:44848"/>
        <dbReference type="ChEBI" id="CHEBI:16347"/>
        <dbReference type="ChEBI" id="CHEBI:57287"/>
        <dbReference type="ChEBI" id="CHEBI:65060"/>
        <dbReference type="ChEBI" id="CHEBI:84647"/>
    </reaction>
</comment>
<comment type="catalytic activity">
    <reaction evidence="2">
        <text>(5Z)-tetradecenoyl-CoA + (R)-carnitine = O-(5Z)-tetradecenoyl-(R)-carnitine + CoA</text>
        <dbReference type="Rhea" id="RHEA:44852"/>
        <dbReference type="ChEBI" id="CHEBI:16347"/>
        <dbReference type="ChEBI" id="CHEBI:57287"/>
        <dbReference type="ChEBI" id="CHEBI:84649"/>
        <dbReference type="ChEBI" id="CHEBI:84650"/>
    </reaction>
</comment>
<comment type="catalytic activity">
    <reaction evidence="2">
        <text>(R)-carnitine + (9Z)-octadecenoyl-CoA = O-(9Z)-octadecenoyl-(R)-carnitine + CoA</text>
        <dbReference type="Rhea" id="RHEA:44856"/>
        <dbReference type="ChEBI" id="CHEBI:16347"/>
        <dbReference type="ChEBI" id="CHEBI:57287"/>
        <dbReference type="ChEBI" id="CHEBI:57387"/>
        <dbReference type="ChEBI" id="CHEBI:84651"/>
    </reaction>
</comment>
<comment type="catalytic activity">
    <reaction evidence="2">
        <text>4,8-dimethylnonanoyl-CoA + (R)-carnitine = O-4,8-dimethylnonanoyl-(R)-carnitine + CoA</text>
        <dbReference type="Rhea" id="RHEA:44860"/>
        <dbReference type="ChEBI" id="CHEBI:16347"/>
        <dbReference type="ChEBI" id="CHEBI:57287"/>
        <dbReference type="ChEBI" id="CHEBI:77061"/>
        <dbReference type="ChEBI" id="CHEBI:84654"/>
    </reaction>
</comment>
<comment type="pathway">
    <text evidence="2">Lipid metabolism; fatty acid beta-oxidation.</text>
</comment>
<comment type="subcellular location">
    <subcellularLocation>
        <location evidence="1">Mitochondrion inner membrane</location>
        <topology evidence="1">Peripheral membrane protein</topology>
        <orientation evidence="1">Matrix side</orientation>
    </subcellularLocation>
</comment>
<comment type="similarity">
    <text evidence="4">Belongs to the carnitine/choline acetyltransferase family.</text>
</comment>
<accession>Q6P4X5</accession>
<feature type="transit peptide" description="Mitochondrion" evidence="3">
    <location>
        <begin position="1"/>
        <end position="26"/>
    </location>
</feature>
<feature type="chain" id="PRO_0000351548" description="Carnitine O-palmitoyltransferase 2, mitochondrial">
    <location>
        <begin position="27"/>
        <end position="658"/>
    </location>
</feature>
<feature type="topological domain" description="Mitochondrial matrix" evidence="1">
    <location>
        <begin position="27"/>
        <end position="179"/>
    </location>
</feature>
<feature type="intramembrane region" description="Note=Mitochondrial inner membrane" evidence="1">
    <location>
        <begin position="180"/>
        <end position="209"/>
    </location>
</feature>
<feature type="topological domain" description="Mitochondrial matrix" evidence="1">
    <location>
        <begin position="210"/>
        <end position="658"/>
    </location>
</feature>
<feature type="active site" description="Proton acceptor" evidence="1">
    <location>
        <position position="373"/>
    </location>
</feature>
<feature type="binding site" evidence="1">
    <location>
        <begin position="453"/>
        <end position="465"/>
    </location>
    <ligand>
        <name>CoA</name>
        <dbReference type="ChEBI" id="CHEBI:57287"/>
    </ligand>
</feature>
<feature type="binding site" evidence="1">
    <location>
        <position position="487"/>
    </location>
    <ligand>
        <name>(R)-carnitine</name>
        <dbReference type="ChEBI" id="CHEBI:16347"/>
    </ligand>
</feature>
<feature type="binding site" evidence="1">
    <location>
        <position position="489"/>
    </location>
    <ligand>
        <name>(R)-carnitine</name>
        <dbReference type="ChEBI" id="CHEBI:16347"/>
    </ligand>
</feature>
<feature type="binding site" evidence="1">
    <location>
        <position position="500"/>
    </location>
    <ligand>
        <name>(R)-carnitine</name>
        <dbReference type="ChEBI" id="CHEBI:16347"/>
    </ligand>
</feature>
<gene>
    <name type="primary">cpt2</name>
</gene>
<keyword id="KW-0012">Acyltransferase</keyword>
<keyword id="KW-0276">Fatty acid metabolism</keyword>
<keyword id="KW-0443">Lipid metabolism</keyword>
<keyword id="KW-0472">Membrane</keyword>
<keyword id="KW-0496">Mitochondrion</keyword>
<keyword id="KW-0999">Mitochondrion inner membrane</keyword>
<keyword id="KW-1185">Reference proteome</keyword>
<keyword id="KW-0808">Transferase</keyword>
<keyword id="KW-0809">Transit peptide</keyword>
<keyword id="KW-0813">Transport</keyword>
<reference key="1">
    <citation type="submission" date="2003-12" db="EMBL/GenBank/DDBJ databases">
        <authorList>
            <consortium name="NIH - Xenopus Gene Collection (XGC) project"/>
        </authorList>
    </citation>
    <scope>NUCLEOTIDE SEQUENCE [LARGE SCALE MRNA]</scope>
    <source>
        <tissue>Embryo</tissue>
    </source>
</reference>